<proteinExistence type="inferred from homology"/>
<accession>Q5WAI0</accession>
<name>PURA_SHOC1</name>
<evidence type="ECO:0000255" key="1">
    <source>
        <dbReference type="HAMAP-Rule" id="MF_00011"/>
    </source>
</evidence>
<sequence length="428" mass="47119">MSSVVVVGTQWGDEGKGKITDYLSEKAEVVARYQGGNNAGHTIVFDGKKYKLHLIPSGIFYKDKICVIGNGMVIDPKALVEELAYLHDHGVDTSNLRISNRAHVILPYHIKLDIVEEDRKGANKIGTTRKGIGPAYMDKAARIGIRIADLLEKDTFAAKVAAVLEEKNRLFEKYYETDGFSAEEIVEEYFHYGEQIAKYVADTSVVLNDALDDGRRVLFEGAQGVMLDIDQGTYPFVTSSNPIAGGVTIGSGVGPSKIHHVVGVSKAYTTRVGDGPFPTELDDEIGDRIRKVGNEYGTTTGRPRRVGWFDSVVVRHARRVSGITDLSLNSIDVLTGLKTLKICTSYRYKGEVLDEFPASLNVLAECEPIYEELPGWEEDITGVKTLHELPENARTYVERVCQLTGIPLTVFSVGPDRSQTNMVRGVFA</sequence>
<feature type="chain" id="PRO_0000224252" description="Adenylosuccinate synthetase">
    <location>
        <begin position="1"/>
        <end position="428"/>
    </location>
</feature>
<feature type="active site" description="Proton acceptor" evidence="1">
    <location>
        <position position="13"/>
    </location>
</feature>
<feature type="active site" description="Proton donor" evidence="1">
    <location>
        <position position="41"/>
    </location>
</feature>
<feature type="binding site" evidence="1">
    <location>
        <begin position="12"/>
        <end position="18"/>
    </location>
    <ligand>
        <name>GTP</name>
        <dbReference type="ChEBI" id="CHEBI:37565"/>
    </ligand>
</feature>
<feature type="binding site" description="in other chain" evidence="1">
    <location>
        <begin position="13"/>
        <end position="16"/>
    </location>
    <ligand>
        <name>IMP</name>
        <dbReference type="ChEBI" id="CHEBI:58053"/>
        <note>ligand shared between dimeric partners</note>
    </ligand>
</feature>
<feature type="binding site" evidence="1">
    <location>
        <position position="13"/>
    </location>
    <ligand>
        <name>Mg(2+)</name>
        <dbReference type="ChEBI" id="CHEBI:18420"/>
    </ligand>
</feature>
<feature type="binding site" description="in other chain" evidence="1">
    <location>
        <begin position="38"/>
        <end position="41"/>
    </location>
    <ligand>
        <name>IMP</name>
        <dbReference type="ChEBI" id="CHEBI:58053"/>
        <note>ligand shared between dimeric partners</note>
    </ligand>
</feature>
<feature type="binding site" evidence="1">
    <location>
        <begin position="40"/>
        <end position="42"/>
    </location>
    <ligand>
        <name>GTP</name>
        <dbReference type="ChEBI" id="CHEBI:37565"/>
    </ligand>
</feature>
<feature type="binding site" evidence="1">
    <location>
        <position position="40"/>
    </location>
    <ligand>
        <name>Mg(2+)</name>
        <dbReference type="ChEBI" id="CHEBI:18420"/>
    </ligand>
</feature>
<feature type="binding site" description="in other chain" evidence="1">
    <location>
        <position position="128"/>
    </location>
    <ligand>
        <name>IMP</name>
        <dbReference type="ChEBI" id="CHEBI:58053"/>
        <note>ligand shared between dimeric partners</note>
    </ligand>
</feature>
<feature type="binding site" evidence="1">
    <location>
        <position position="142"/>
    </location>
    <ligand>
        <name>IMP</name>
        <dbReference type="ChEBI" id="CHEBI:58053"/>
        <note>ligand shared between dimeric partners</note>
    </ligand>
</feature>
<feature type="binding site" description="in other chain" evidence="1">
    <location>
        <position position="223"/>
    </location>
    <ligand>
        <name>IMP</name>
        <dbReference type="ChEBI" id="CHEBI:58053"/>
        <note>ligand shared between dimeric partners</note>
    </ligand>
</feature>
<feature type="binding site" description="in other chain" evidence="1">
    <location>
        <position position="238"/>
    </location>
    <ligand>
        <name>IMP</name>
        <dbReference type="ChEBI" id="CHEBI:58053"/>
        <note>ligand shared between dimeric partners</note>
    </ligand>
</feature>
<feature type="binding site" evidence="1">
    <location>
        <begin position="298"/>
        <end position="304"/>
    </location>
    <ligand>
        <name>substrate</name>
    </ligand>
</feature>
<feature type="binding site" description="in other chain" evidence="1">
    <location>
        <position position="302"/>
    </location>
    <ligand>
        <name>IMP</name>
        <dbReference type="ChEBI" id="CHEBI:58053"/>
        <note>ligand shared between dimeric partners</note>
    </ligand>
</feature>
<feature type="binding site" evidence="1">
    <location>
        <position position="304"/>
    </location>
    <ligand>
        <name>GTP</name>
        <dbReference type="ChEBI" id="CHEBI:37565"/>
    </ligand>
</feature>
<feature type="binding site" evidence="1">
    <location>
        <begin position="330"/>
        <end position="332"/>
    </location>
    <ligand>
        <name>GTP</name>
        <dbReference type="ChEBI" id="CHEBI:37565"/>
    </ligand>
</feature>
<feature type="binding site" evidence="1">
    <location>
        <begin position="412"/>
        <end position="414"/>
    </location>
    <ligand>
        <name>GTP</name>
        <dbReference type="ChEBI" id="CHEBI:37565"/>
    </ligand>
</feature>
<comment type="function">
    <text evidence="1">Plays an important role in the de novo pathway of purine nucleotide biosynthesis. Catalyzes the first committed step in the biosynthesis of AMP from IMP.</text>
</comment>
<comment type="catalytic activity">
    <reaction evidence="1">
        <text>IMP + L-aspartate + GTP = N(6)-(1,2-dicarboxyethyl)-AMP + GDP + phosphate + 2 H(+)</text>
        <dbReference type="Rhea" id="RHEA:15753"/>
        <dbReference type="ChEBI" id="CHEBI:15378"/>
        <dbReference type="ChEBI" id="CHEBI:29991"/>
        <dbReference type="ChEBI" id="CHEBI:37565"/>
        <dbReference type="ChEBI" id="CHEBI:43474"/>
        <dbReference type="ChEBI" id="CHEBI:57567"/>
        <dbReference type="ChEBI" id="CHEBI:58053"/>
        <dbReference type="ChEBI" id="CHEBI:58189"/>
        <dbReference type="EC" id="6.3.4.4"/>
    </reaction>
</comment>
<comment type="cofactor">
    <cofactor evidence="1">
        <name>Mg(2+)</name>
        <dbReference type="ChEBI" id="CHEBI:18420"/>
    </cofactor>
    <text evidence="1">Binds 1 Mg(2+) ion per subunit.</text>
</comment>
<comment type="pathway">
    <text evidence="1">Purine metabolism; AMP biosynthesis via de novo pathway; AMP from IMP: step 1/2.</text>
</comment>
<comment type="subunit">
    <text evidence="1">Homodimer.</text>
</comment>
<comment type="subcellular location">
    <subcellularLocation>
        <location evidence="1">Cytoplasm</location>
    </subcellularLocation>
</comment>
<comment type="similarity">
    <text evidence="1">Belongs to the adenylosuccinate synthetase family.</text>
</comment>
<organism>
    <name type="scientific">Shouchella clausii (strain KSM-K16)</name>
    <name type="common">Alkalihalobacillus clausii</name>
    <dbReference type="NCBI Taxonomy" id="66692"/>
    <lineage>
        <taxon>Bacteria</taxon>
        <taxon>Bacillati</taxon>
        <taxon>Bacillota</taxon>
        <taxon>Bacilli</taxon>
        <taxon>Bacillales</taxon>
        <taxon>Bacillaceae</taxon>
        <taxon>Shouchella</taxon>
    </lineage>
</organism>
<protein>
    <recommendedName>
        <fullName evidence="1">Adenylosuccinate synthetase</fullName>
        <shortName evidence="1">AMPSase</shortName>
        <shortName evidence="1">AdSS</shortName>
        <ecNumber evidence="1">6.3.4.4</ecNumber>
    </recommendedName>
    <alternativeName>
        <fullName evidence="1">IMP--aspartate ligase</fullName>
    </alternativeName>
</protein>
<gene>
    <name evidence="1" type="primary">purA</name>
    <name type="ordered locus">ABC4100</name>
</gene>
<dbReference type="EC" id="6.3.4.4" evidence="1"/>
<dbReference type="EMBL" id="AP006627">
    <property type="protein sequence ID" value="BAD66631.1"/>
    <property type="molecule type" value="Genomic_DNA"/>
</dbReference>
<dbReference type="RefSeq" id="WP_011248933.1">
    <property type="nucleotide sequence ID" value="NC_006582.1"/>
</dbReference>
<dbReference type="SMR" id="Q5WAI0"/>
<dbReference type="STRING" id="66692.ABC4100"/>
<dbReference type="KEGG" id="bcl:ABC4100"/>
<dbReference type="eggNOG" id="COG0104">
    <property type="taxonomic scope" value="Bacteria"/>
</dbReference>
<dbReference type="HOGENOM" id="CLU_029848_0_0_9"/>
<dbReference type="OrthoDB" id="9807553at2"/>
<dbReference type="UniPathway" id="UPA00075">
    <property type="reaction ID" value="UER00335"/>
</dbReference>
<dbReference type="Proteomes" id="UP000001168">
    <property type="component" value="Chromosome"/>
</dbReference>
<dbReference type="GO" id="GO:0005737">
    <property type="term" value="C:cytoplasm"/>
    <property type="evidence" value="ECO:0007669"/>
    <property type="project" value="UniProtKB-SubCell"/>
</dbReference>
<dbReference type="GO" id="GO:0004019">
    <property type="term" value="F:adenylosuccinate synthase activity"/>
    <property type="evidence" value="ECO:0007669"/>
    <property type="project" value="UniProtKB-UniRule"/>
</dbReference>
<dbReference type="GO" id="GO:0005525">
    <property type="term" value="F:GTP binding"/>
    <property type="evidence" value="ECO:0007669"/>
    <property type="project" value="UniProtKB-UniRule"/>
</dbReference>
<dbReference type="GO" id="GO:0000287">
    <property type="term" value="F:magnesium ion binding"/>
    <property type="evidence" value="ECO:0007669"/>
    <property type="project" value="UniProtKB-UniRule"/>
</dbReference>
<dbReference type="GO" id="GO:0044208">
    <property type="term" value="P:'de novo' AMP biosynthetic process"/>
    <property type="evidence" value="ECO:0007669"/>
    <property type="project" value="UniProtKB-UniRule"/>
</dbReference>
<dbReference type="GO" id="GO:0046040">
    <property type="term" value="P:IMP metabolic process"/>
    <property type="evidence" value="ECO:0007669"/>
    <property type="project" value="TreeGrafter"/>
</dbReference>
<dbReference type="CDD" id="cd03108">
    <property type="entry name" value="AdSS"/>
    <property type="match status" value="1"/>
</dbReference>
<dbReference type="FunFam" id="1.10.300.10:FF:000001">
    <property type="entry name" value="Adenylosuccinate synthetase"/>
    <property type="match status" value="1"/>
</dbReference>
<dbReference type="FunFam" id="3.90.170.10:FF:000001">
    <property type="entry name" value="Adenylosuccinate synthetase"/>
    <property type="match status" value="1"/>
</dbReference>
<dbReference type="Gene3D" id="3.40.440.10">
    <property type="entry name" value="Adenylosuccinate Synthetase, subunit A, domain 1"/>
    <property type="match status" value="1"/>
</dbReference>
<dbReference type="Gene3D" id="1.10.300.10">
    <property type="entry name" value="Adenylosuccinate Synthetase, subunit A, domain 2"/>
    <property type="match status" value="1"/>
</dbReference>
<dbReference type="Gene3D" id="3.90.170.10">
    <property type="entry name" value="Adenylosuccinate Synthetase, subunit A, domain 3"/>
    <property type="match status" value="1"/>
</dbReference>
<dbReference type="HAMAP" id="MF_00011">
    <property type="entry name" value="Adenylosucc_synth"/>
    <property type="match status" value="1"/>
</dbReference>
<dbReference type="InterPro" id="IPR018220">
    <property type="entry name" value="Adenylosuccin_syn_GTP-bd"/>
</dbReference>
<dbReference type="InterPro" id="IPR033128">
    <property type="entry name" value="Adenylosuccin_syn_Lys_AS"/>
</dbReference>
<dbReference type="InterPro" id="IPR042109">
    <property type="entry name" value="Adenylosuccinate_synth_dom1"/>
</dbReference>
<dbReference type="InterPro" id="IPR042110">
    <property type="entry name" value="Adenylosuccinate_synth_dom2"/>
</dbReference>
<dbReference type="InterPro" id="IPR042111">
    <property type="entry name" value="Adenylosuccinate_synth_dom3"/>
</dbReference>
<dbReference type="InterPro" id="IPR001114">
    <property type="entry name" value="Adenylosuccinate_synthetase"/>
</dbReference>
<dbReference type="InterPro" id="IPR027417">
    <property type="entry name" value="P-loop_NTPase"/>
</dbReference>
<dbReference type="NCBIfam" id="NF002223">
    <property type="entry name" value="PRK01117.1"/>
    <property type="match status" value="1"/>
</dbReference>
<dbReference type="NCBIfam" id="TIGR00184">
    <property type="entry name" value="purA"/>
    <property type="match status" value="1"/>
</dbReference>
<dbReference type="PANTHER" id="PTHR11846">
    <property type="entry name" value="ADENYLOSUCCINATE SYNTHETASE"/>
    <property type="match status" value="1"/>
</dbReference>
<dbReference type="PANTHER" id="PTHR11846:SF0">
    <property type="entry name" value="ADENYLOSUCCINATE SYNTHETASE"/>
    <property type="match status" value="1"/>
</dbReference>
<dbReference type="Pfam" id="PF00709">
    <property type="entry name" value="Adenylsucc_synt"/>
    <property type="match status" value="1"/>
</dbReference>
<dbReference type="SMART" id="SM00788">
    <property type="entry name" value="Adenylsucc_synt"/>
    <property type="match status" value="1"/>
</dbReference>
<dbReference type="SUPFAM" id="SSF52540">
    <property type="entry name" value="P-loop containing nucleoside triphosphate hydrolases"/>
    <property type="match status" value="1"/>
</dbReference>
<dbReference type="PROSITE" id="PS01266">
    <property type="entry name" value="ADENYLOSUCCIN_SYN_1"/>
    <property type="match status" value="1"/>
</dbReference>
<dbReference type="PROSITE" id="PS00513">
    <property type="entry name" value="ADENYLOSUCCIN_SYN_2"/>
    <property type="match status" value="1"/>
</dbReference>
<reference key="1">
    <citation type="submission" date="2003-10" db="EMBL/GenBank/DDBJ databases">
        <title>The complete genome sequence of the alkaliphilic Bacillus clausii KSM-K16.</title>
        <authorList>
            <person name="Takaki Y."/>
            <person name="Kageyama Y."/>
            <person name="Shimamura S."/>
            <person name="Suzuki H."/>
            <person name="Nishi S."/>
            <person name="Hatada Y."/>
            <person name="Kawai S."/>
            <person name="Ito S."/>
            <person name="Horikoshi K."/>
        </authorList>
    </citation>
    <scope>NUCLEOTIDE SEQUENCE [LARGE SCALE GENOMIC DNA]</scope>
    <source>
        <strain>KSM-K16</strain>
    </source>
</reference>
<keyword id="KW-0963">Cytoplasm</keyword>
<keyword id="KW-0342">GTP-binding</keyword>
<keyword id="KW-0436">Ligase</keyword>
<keyword id="KW-0460">Magnesium</keyword>
<keyword id="KW-0479">Metal-binding</keyword>
<keyword id="KW-0547">Nucleotide-binding</keyword>
<keyword id="KW-0658">Purine biosynthesis</keyword>
<keyword id="KW-1185">Reference proteome</keyword>